<gene>
    <name evidence="1" type="primary">rbfA</name>
    <name type="ordered locus">Cthe_0990</name>
</gene>
<comment type="function">
    <text evidence="1">One of several proteins that assist in the late maturation steps of the functional core of the 30S ribosomal subunit. Associates with free 30S ribosomal subunits (but not with 30S subunits that are part of 70S ribosomes or polysomes). Required for efficient processing of 16S rRNA. May interact with the 5'-terminal helix region of 16S rRNA.</text>
</comment>
<comment type="subunit">
    <text evidence="1">Monomer. Binds 30S ribosomal subunits, but not 50S ribosomal subunits or 70S ribosomes.</text>
</comment>
<comment type="subcellular location">
    <subcellularLocation>
        <location evidence="1">Cytoplasm</location>
    </subcellularLocation>
</comment>
<comment type="similarity">
    <text evidence="1">Belongs to the RbfA family.</text>
</comment>
<keyword id="KW-0963">Cytoplasm</keyword>
<keyword id="KW-1185">Reference proteome</keyword>
<keyword id="KW-0690">Ribosome biogenesis</keyword>
<organism>
    <name type="scientific">Acetivibrio thermocellus (strain ATCC 27405 / DSM 1237 / JCM 9322 / NBRC 103400 / NCIMB 10682 / NRRL B-4536 / VPI 7372)</name>
    <name type="common">Clostridium thermocellum</name>
    <dbReference type="NCBI Taxonomy" id="203119"/>
    <lineage>
        <taxon>Bacteria</taxon>
        <taxon>Bacillati</taxon>
        <taxon>Bacillota</taxon>
        <taxon>Clostridia</taxon>
        <taxon>Eubacteriales</taxon>
        <taxon>Oscillospiraceae</taxon>
        <taxon>Acetivibrio</taxon>
    </lineage>
</organism>
<feature type="chain" id="PRO_0000329326" description="Ribosome-binding factor A">
    <location>
        <begin position="1"/>
        <end position="123"/>
    </location>
</feature>
<protein>
    <recommendedName>
        <fullName evidence="1">Ribosome-binding factor A</fullName>
    </recommendedName>
</protein>
<proteinExistence type="inferred from homology"/>
<name>RBFA_ACET2</name>
<dbReference type="EMBL" id="CP000568">
    <property type="protein sequence ID" value="ABN52222.1"/>
    <property type="molecule type" value="Genomic_DNA"/>
</dbReference>
<dbReference type="RefSeq" id="WP_004463458.1">
    <property type="nucleotide sequence ID" value="NC_009012.1"/>
</dbReference>
<dbReference type="SMR" id="A3DE43"/>
<dbReference type="STRING" id="203119.Cthe_0990"/>
<dbReference type="GeneID" id="35802991"/>
<dbReference type="KEGG" id="cth:Cthe_0990"/>
<dbReference type="eggNOG" id="COG0858">
    <property type="taxonomic scope" value="Bacteria"/>
</dbReference>
<dbReference type="HOGENOM" id="CLU_089475_6_3_9"/>
<dbReference type="OrthoDB" id="307788at2"/>
<dbReference type="Proteomes" id="UP000002145">
    <property type="component" value="Chromosome"/>
</dbReference>
<dbReference type="GO" id="GO:0005829">
    <property type="term" value="C:cytosol"/>
    <property type="evidence" value="ECO:0007669"/>
    <property type="project" value="TreeGrafter"/>
</dbReference>
<dbReference type="GO" id="GO:0043024">
    <property type="term" value="F:ribosomal small subunit binding"/>
    <property type="evidence" value="ECO:0007669"/>
    <property type="project" value="TreeGrafter"/>
</dbReference>
<dbReference type="GO" id="GO:0030490">
    <property type="term" value="P:maturation of SSU-rRNA"/>
    <property type="evidence" value="ECO:0007669"/>
    <property type="project" value="UniProtKB-UniRule"/>
</dbReference>
<dbReference type="Gene3D" id="3.30.300.20">
    <property type="match status" value="1"/>
</dbReference>
<dbReference type="HAMAP" id="MF_00003">
    <property type="entry name" value="RbfA"/>
    <property type="match status" value="1"/>
</dbReference>
<dbReference type="InterPro" id="IPR015946">
    <property type="entry name" value="KH_dom-like_a/b"/>
</dbReference>
<dbReference type="InterPro" id="IPR000238">
    <property type="entry name" value="RbfA"/>
</dbReference>
<dbReference type="InterPro" id="IPR023799">
    <property type="entry name" value="RbfA_dom_sf"/>
</dbReference>
<dbReference type="InterPro" id="IPR020053">
    <property type="entry name" value="Ribosome-bd_factorA_CS"/>
</dbReference>
<dbReference type="NCBIfam" id="TIGR00082">
    <property type="entry name" value="rbfA"/>
    <property type="match status" value="1"/>
</dbReference>
<dbReference type="PANTHER" id="PTHR33515">
    <property type="entry name" value="RIBOSOME-BINDING FACTOR A, CHLOROPLASTIC-RELATED"/>
    <property type="match status" value="1"/>
</dbReference>
<dbReference type="PANTHER" id="PTHR33515:SF1">
    <property type="entry name" value="RIBOSOME-BINDING FACTOR A, CHLOROPLASTIC-RELATED"/>
    <property type="match status" value="1"/>
</dbReference>
<dbReference type="Pfam" id="PF02033">
    <property type="entry name" value="RBFA"/>
    <property type="match status" value="1"/>
</dbReference>
<dbReference type="SUPFAM" id="SSF89919">
    <property type="entry name" value="Ribosome-binding factor A, RbfA"/>
    <property type="match status" value="1"/>
</dbReference>
<dbReference type="PROSITE" id="PS01319">
    <property type="entry name" value="RBFA"/>
    <property type="match status" value="1"/>
</dbReference>
<evidence type="ECO:0000255" key="1">
    <source>
        <dbReference type="HAMAP-Rule" id="MF_00003"/>
    </source>
</evidence>
<accession>A3DE43</accession>
<sequence>MERIERISEEIKREISDIIQNELKDPRLSKLISITEVNVTKDLRYAKVYVSVMGSEEEKANSLEGLKSAAGFIRREIGRRVQLRYTPEIHFELDNSIERGAYITKLINETSAQNKGSKDPEDT</sequence>
<reference key="1">
    <citation type="submission" date="2007-02" db="EMBL/GenBank/DDBJ databases">
        <title>Complete sequence of Clostridium thermocellum ATCC 27405.</title>
        <authorList>
            <consortium name="US DOE Joint Genome Institute"/>
            <person name="Copeland A."/>
            <person name="Lucas S."/>
            <person name="Lapidus A."/>
            <person name="Barry K."/>
            <person name="Detter J.C."/>
            <person name="Glavina del Rio T."/>
            <person name="Hammon N."/>
            <person name="Israni S."/>
            <person name="Dalin E."/>
            <person name="Tice H."/>
            <person name="Pitluck S."/>
            <person name="Chertkov O."/>
            <person name="Brettin T."/>
            <person name="Bruce D."/>
            <person name="Han C."/>
            <person name="Tapia R."/>
            <person name="Gilna P."/>
            <person name="Schmutz J."/>
            <person name="Larimer F."/>
            <person name="Land M."/>
            <person name="Hauser L."/>
            <person name="Kyrpides N."/>
            <person name="Mikhailova N."/>
            <person name="Wu J.H.D."/>
            <person name="Newcomb M."/>
            <person name="Richardson P."/>
        </authorList>
    </citation>
    <scope>NUCLEOTIDE SEQUENCE [LARGE SCALE GENOMIC DNA]</scope>
    <source>
        <strain>ATCC 27405 / DSM 1237 / JCM 9322 / NBRC 103400 / NCIMB 10682 / NRRL B-4536 / VPI 7372</strain>
    </source>
</reference>